<name>SPED_YERPS</name>
<protein>
    <recommendedName>
        <fullName evidence="1">S-adenosylmethionine decarboxylase proenzyme</fullName>
        <shortName evidence="1">AdoMetDC</shortName>
        <shortName evidence="1">SAMDC</shortName>
        <ecNumber evidence="1">4.1.1.50</ecNumber>
    </recommendedName>
    <component>
        <recommendedName>
            <fullName evidence="1">S-adenosylmethionine decarboxylase beta chain</fullName>
        </recommendedName>
    </component>
    <component>
        <recommendedName>
            <fullName evidence="1">S-adenosylmethionine decarboxylase alpha chain</fullName>
        </recommendedName>
    </component>
</protein>
<comment type="function">
    <text evidence="1">Catalyzes the decarboxylation of S-adenosylmethionine to S-adenosylmethioninamine (dcAdoMet), the propylamine donor required for the synthesis of the polyamines spermine and spermidine from the diamine putrescine.</text>
</comment>
<comment type="catalytic activity">
    <reaction evidence="1">
        <text>S-adenosyl-L-methionine + H(+) = S-adenosyl 3-(methylsulfanyl)propylamine + CO2</text>
        <dbReference type="Rhea" id="RHEA:15981"/>
        <dbReference type="ChEBI" id="CHEBI:15378"/>
        <dbReference type="ChEBI" id="CHEBI:16526"/>
        <dbReference type="ChEBI" id="CHEBI:57443"/>
        <dbReference type="ChEBI" id="CHEBI:59789"/>
        <dbReference type="EC" id="4.1.1.50"/>
    </reaction>
</comment>
<comment type="cofactor">
    <cofactor evidence="1">
        <name>pyruvate</name>
        <dbReference type="ChEBI" id="CHEBI:15361"/>
    </cofactor>
    <text evidence="1">Binds 1 pyruvoyl group covalently per subunit.</text>
</comment>
<comment type="pathway">
    <text evidence="1">Amine and polyamine biosynthesis; S-adenosylmethioninamine biosynthesis; S-adenosylmethioninamine from S-adenosyl-L-methionine: step 1/1.</text>
</comment>
<comment type="subunit">
    <text evidence="1">Heterooctamer of four alpha and four beta chains arranged as a tetramer of alpha/beta heterodimers.</text>
</comment>
<comment type="PTM">
    <text evidence="1">Is synthesized initially as an inactive proenzyme. Formation of the active enzyme involves a self-maturation process in which the active site pyruvoyl group is generated from an internal serine residue via an autocatalytic post-translational modification. Two non-identical subunits are generated from the proenzyme in this reaction, and the pyruvate is formed at the N-terminus of the alpha chain, which is derived from the carboxyl end of the proenzyme. The post-translation cleavage follows an unusual pathway, termed non-hydrolytic serinolysis, in which the side chain hydroxyl group of the serine supplies its oxygen atom to form the C-terminus of the beta chain, while the remainder of the serine residue undergoes an oxidative deamination to produce ammonia and the pyruvoyl group blocking the N-terminus of the alpha chain.</text>
</comment>
<comment type="similarity">
    <text evidence="1">Belongs to the prokaryotic AdoMetDC family. Type 2 subfamily.</text>
</comment>
<evidence type="ECO:0000255" key="1">
    <source>
        <dbReference type="HAMAP-Rule" id="MF_00465"/>
    </source>
</evidence>
<gene>
    <name evidence="1" type="primary">speD</name>
    <name type="ordered locus">YPTB0719</name>
</gene>
<proteinExistence type="inferred from homology"/>
<feature type="chain" id="PRO_0000030077" description="S-adenosylmethionine decarboxylase beta chain" evidence="1">
    <location>
        <begin position="1"/>
        <end position="111"/>
    </location>
</feature>
<feature type="chain" id="PRO_0000030078" description="S-adenosylmethionine decarboxylase alpha chain" evidence="1">
    <location>
        <begin position="112"/>
        <end position="264"/>
    </location>
</feature>
<feature type="active site" description="Schiff-base intermediate with substrate; via pyruvic acid" evidence="1">
    <location>
        <position position="112"/>
    </location>
</feature>
<feature type="active site" description="Proton acceptor; for processing activity" evidence="1">
    <location>
        <position position="117"/>
    </location>
</feature>
<feature type="active site" description="Proton donor; for catalytic activity" evidence="1">
    <location>
        <position position="140"/>
    </location>
</feature>
<feature type="site" description="Cleavage (non-hydrolytic); by autolysis" evidence="1">
    <location>
        <begin position="111"/>
        <end position="112"/>
    </location>
</feature>
<feature type="modified residue" description="Pyruvic acid (Ser); by autocatalysis" evidence="1">
    <location>
        <position position="112"/>
    </location>
</feature>
<organism>
    <name type="scientific">Yersinia pseudotuberculosis serotype I (strain IP32953)</name>
    <dbReference type="NCBI Taxonomy" id="273123"/>
    <lineage>
        <taxon>Bacteria</taxon>
        <taxon>Pseudomonadati</taxon>
        <taxon>Pseudomonadota</taxon>
        <taxon>Gammaproteobacteria</taxon>
        <taxon>Enterobacterales</taxon>
        <taxon>Yersiniaceae</taxon>
        <taxon>Yersinia</taxon>
    </lineage>
</organism>
<keyword id="KW-0068">Autocatalytic cleavage</keyword>
<keyword id="KW-0210">Decarboxylase</keyword>
<keyword id="KW-0456">Lyase</keyword>
<keyword id="KW-0620">Polyamine biosynthesis</keyword>
<keyword id="KW-0670">Pyruvate</keyword>
<keyword id="KW-0949">S-adenosyl-L-methionine</keyword>
<keyword id="KW-0704">Schiff base</keyword>
<keyword id="KW-0745">Spermidine biosynthesis</keyword>
<keyword id="KW-0865">Zymogen</keyword>
<sequence>MSKLKLHGFNNLTKSLSFCIYDICYAKTADDRDGYIAYIDEQYNANRLTEILSETCSIIGANILNIARQDYDPQGASVTILVSEEPVDPRDVDTSEHPGPLPSAVVAHLDKSHICVHTYPESHPEAGLCTFRADIEVSTCGVISPLKALNYLIHQLESDIVTMDYRVRGFTRDINGVKHFIDHKINSIQNFMSDDMKSLYHMMDVNVYQENIFHTKMMLKDFDLKHYLFNAKPEELSAEEKEQITCLLYKEMQEIYYGRNVPEV</sequence>
<accession>Q66EH4</accession>
<dbReference type="EC" id="4.1.1.50" evidence="1"/>
<dbReference type="EMBL" id="BX936398">
    <property type="protein sequence ID" value="CAH19959.1"/>
    <property type="molecule type" value="Genomic_DNA"/>
</dbReference>
<dbReference type="RefSeq" id="WP_011191745.1">
    <property type="nucleotide sequence ID" value="NC_006155.1"/>
</dbReference>
<dbReference type="SMR" id="Q66EH4"/>
<dbReference type="KEGG" id="ypo:BZ17_1836"/>
<dbReference type="KEGG" id="yps:YPTB0719"/>
<dbReference type="PATRIC" id="fig|273123.14.peg.1947"/>
<dbReference type="UniPathway" id="UPA00331">
    <property type="reaction ID" value="UER00451"/>
</dbReference>
<dbReference type="Proteomes" id="UP000001011">
    <property type="component" value="Chromosome"/>
</dbReference>
<dbReference type="GO" id="GO:0005829">
    <property type="term" value="C:cytosol"/>
    <property type="evidence" value="ECO:0007669"/>
    <property type="project" value="TreeGrafter"/>
</dbReference>
<dbReference type="GO" id="GO:0004014">
    <property type="term" value="F:adenosylmethionine decarboxylase activity"/>
    <property type="evidence" value="ECO:0007669"/>
    <property type="project" value="UniProtKB-UniRule"/>
</dbReference>
<dbReference type="GO" id="GO:0008295">
    <property type="term" value="P:spermidine biosynthetic process"/>
    <property type="evidence" value="ECO:0007669"/>
    <property type="project" value="UniProtKB-UniRule"/>
</dbReference>
<dbReference type="FunFam" id="3.60.90.10:FF:000001">
    <property type="entry name" value="S-adenosylmethionine decarboxylase proenzyme"/>
    <property type="match status" value="1"/>
</dbReference>
<dbReference type="Gene3D" id="3.60.90.10">
    <property type="entry name" value="S-adenosylmethionine decarboxylase"/>
    <property type="match status" value="1"/>
</dbReference>
<dbReference type="HAMAP" id="MF_00465">
    <property type="entry name" value="AdoMetDC_2"/>
    <property type="match status" value="1"/>
</dbReference>
<dbReference type="InterPro" id="IPR003826">
    <property type="entry name" value="AdoMetDC_fam_prok"/>
</dbReference>
<dbReference type="InterPro" id="IPR009165">
    <property type="entry name" value="S-AdoMet_deCO2ase_bac"/>
</dbReference>
<dbReference type="InterPro" id="IPR016067">
    <property type="entry name" value="S-AdoMet_deCO2ase_core"/>
</dbReference>
<dbReference type="NCBIfam" id="TIGR03331">
    <property type="entry name" value="SAM_DCase_Eco"/>
    <property type="match status" value="1"/>
</dbReference>
<dbReference type="PANTHER" id="PTHR33866">
    <property type="entry name" value="S-ADENOSYLMETHIONINE DECARBOXYLASE PROENZYME"/>
    <property type="match status" value="1"/>
</dbReference>
<dbReference type="PANTHER" id="PTHR33866:SF1">
    <property type="entry name" value="S-ADENOSYLMETHIONINE DECARBOXYLASE PROENZYME"/>
    <property type="match status" value="1"/>
</dbReference>
<dbReference type="Pfam" id="PF02675">
    <property type="entry name" value="AdoMet_dc"/>
    <property type="match status" value="1"/>
</dbReference>
<dbReference type="PIRSF" id="PIRSF001356">
    <property type="entry name" value="SAM_decarboxylas"/>
    <property type="match status" value="1"/>
</dbReference>
<dbReference type="SUPFAM" id="SSF56276">
    <property type="entry name" value="S-adenosylmethionine decarboxylase"/>
    <property type="match status" value="1"/>
</dbReference>
<reference key="1">
    <citation type="journal article" date="2004" name="Proc. Natl. Acad. Sci. U.S.A.">
        <title>Insights into the evolution of Yersinia pestis through whole-genome comparison with Yersinia pseudotuberculosis.</title>
        <authorList>
            <person name="Chain P.S.G."/>
            <person name="Carniel E."/>
            <person name="Larimer F.W."/>
            <person name="Lamerdin J."/>
            <person name="Stoutland P.O."/>
            <person name="Regala W.M."/>
            <person name="Georgescu A.M."/>
            <person name="Vergez L.M."/>
            <person name="Land M.L."/>
            <person name="Motin V.L."/>
            <person name="Brubaker R.R."/>
            <person name="Fowler J."/>
            <person name="Hinnebusch J."/>
            <person name="Marceau M."/>
            <person name="Medigue C."/>
            <person name="Simonet M."/>
            <person name="Chenal-Francisque V."/>
            <person name="Souza B."/>
            <person name="Dacheux D."/>
            <person name="Elliott J.M."/>
            <person name="Derbise A."/>
            <person name="Hauser L.J."/>
            <person name="Garcia E."/>
        </authorList>
    </citation>
    <scope>NUCLEOTIDE SEQUENCE [LARGE SCALE GENOMIC DNA]</scope>
    <source>
        <strain>IP32953</strain>
    </source>
</reference>